<feature type="chain" id="PRO_1000121610" description="Large ribosomal subunit protein bL28">
    <location>
        <begin position="1"/>
        <end position="63"/>
    </location>
</feature>
<accession>B1KX48</accession>
<reference key="1">
    <citation type="journal article" date="2007" name="PLoS ONE">
        <title>Analysis of the neurotoxin complex genes in Clostridium botulinum A1-A4 and B1 strains: BoNT/A3, /Ba4 and /B1 clusters are located within plasmids.</title>
        <authorList>
            <person name="Smith T.J."/>
            <person name="Hill K.K."/>
            <person name="Foley B.T."/>
            <person name="Detter J.C."/>
            <person name="Munk A.C."/>
            <person name="Bruce D.C."/>
            <person name="Doggett N.A."/>
            <person name="Smith L.A."/>
            <person name="Marks J.D."/>
            <person name="Xie G."/>
            <person name="Brettin T.S."/>
        </authorList>
    </citation>
    <scope>NUCLEOTIDE SEQUENCE [LARGE SCALE GENOMIC DNA]</scope>
    <source>
        <strain>Loch Maree / Type A3</strain>
    </source>
</reference>
<sequence length="63" mass="7111">MSRKCEICGKGVVYGVQYSHSHRQSKRSFAPNIKRVKAIVNGTPKRVHVCTRCLRSGKVQRAI</sequence>
<keyword id="KW-0687">Ribonucleoprotein</keyword>
<keyword id="KW-0689">Ribosomal protein</keyword>
<gene>
    <name evidence="1" type="primary">rpmB</name>
    <name type="ordered locus">CLK_1880</name>
</gene>
<evidence type="ECO:0000255" key="1">
    <source>
        <dbReference type="HAMAP-Rule" id="MF_00373"/>
    </source>
</evidence>
<evidence type="ECO:0000305" key="2"/>
<comment type="similarity">
    <text evidence="1">Belongs to the bacterial ribosomal protein bL28 family.</text>
</comment>
<dbReference type="EMBL" id="CP000962">
    <property type="protein sequence ID" value="ACA56833.1"/>
    <property type="molecule type" value="Genomic_DNA"/>
</dbReference>
<dbReference type="RefSeq" id="WP_003395976.1">
    <property type="nucleotide sequence ID" value="NC_010520.1"/>
</dbReference>
<dbReference type="SMR" id="B1KX48"/>
<dbReference type="GeneID" id="92939241"/>
<dbReference type="KEGG" id="cbl:CLK_1880"/>
<dbReference type="HOGENOM" id="CLU_064548_7_0_9"/>
<dbReference type="GO" id="GO:1990904">
    <property type="term" value="C:ribonucleoprotein complex"/>
    <property type="evidence" value="ECO:0007669"/>
    <property type="project" value="UniProtKB-KW"/>
</dbReference>
<dbReference type="GO" id="GO:0005840">
    <property type="term" value="C:ribosome"/>
    <property type="evidence" value="ECO:0007669"/>
    <property type="project" value="UniProtKB-KW"/>
</dbReference>
<dbReference type="GO" id="GO:0003735">
    <property type="term" value="F:structural constituent of ribosome"/>
    <property type="evidence" value="ECO:0007669"/>
    <property type="project" value="InterPro"/>
</dbReference>
<dbReference type="GO" id="GO:0006412">
    <property type="term" value="P:translation"/>
    <property type="evidence" value="ECO:0007669"/>
    <property type="project" value="UniProtKB-UniRule"/>
</dbReference>
<dbReference type="Gene3D" id="2.30.170.40">
    <property type="entry name" value="Ribosomal protein L28/L24"/>
    <property type="match status" value="1"/>
</dbReference>
<dbReference type="HAMAP" id="MF_00373">
    <property type="entry name" value="Ribosomal_bL28"/>
    <property type="match status" value="1"/>
</dbReference>
<dbReference type="InterPro" id="IPR050096">
    <property type="entry name" value="Bacterial_rp_bL28"/>
</dbReference>
<dbReference type="InterPro" id="IPR026569">
    <property type="entry name" value="Ribosomal_bL28"/>
</dbReference>
<dbReference type="InterPro" id="IPR034704">
    <property type="entry name" value="Ribosomal_bL28/bL31-like_sf"/>
</dbReference>
<dbReference type="InterPro" id="IPR001383">
    <property type="entry name" value="Ribosomal_bL28_bact-type"/>
</dbReference>
<dbReference type="InterPro" id="IPR037147">
    <property type="entry name" value="Ribosomal_bL28_sf"/>
</dbReference>
<dbReference type="NCBIfam" id="TIGR00009">
    <property type="entry name" value="L28"/>
    <property type="match status" value="1"/>
</dbReference>
<dbReference type="PANTHER" id="PTHR39080">
    <property type="entry name" value="50S RIBOSOMAL PROTEIN L28"/>
    <property type="match status" value="1"/>
</dbReference>
<dbReference type="PANTHER" id="PTHR39080:SF1">
    <property type="entry name" value="LARGE RIBOSOMAL SUBUNIT PROTEIN BL28A"/>
    <property type="match status" value="1"/>
</dbReference>
<dbReference type="Pfam" id="PF00830">
    <property type="entry name" value="Ribosomal_L28"/>
    <property type="match status" value="1"/>
</dbReference>
<dbReference type="SUPFAM" id="SSF143800">
    <property type="entry name" value="L28p-like"/>
    <property type="match status" value="1"/>
</dbReference>
<protein>
    <recommendedName>
        <fullName evidence="1">Large ribosomal subunit protein bL28</fullName>
    </recommendedName>
    <alternativeName>
        <fullName evidence="2">50S ribosomal protein L28</fullName>
    </alternativeName>
</protein>
<name>RL28_CLOBM</name>
<proteinExistence type="inferred from homology"/>
<organism>
    <name type="scientific">Clostridium botulinum (strain Loch Maree / Type A3)</name>
    <dbReference type="NCBI Taxonomy" id="498214"/>
    <lineage>
        <taxon>Bacteria</taxon>
        <taxon>Bacillati</taxon>
        <taxon>Bacillota</taxon>
        <taxon>Clostridia</taxon>
        <taxon>Eubacteriales</taxon>
        <taxon>Clostridiaceae</taxon>
        <taxon>Clostridium</taxon>
    </lineage>
</organism>